<organism>
    <name type="scientific">Burkholderia pseudomallei (strain 1710b)</name>
    <dbReference type="NCBI Taxonomy" id="320372"/>
    <lineage>
        <taxon>Bacteria</taxon>
        <taxon>Pseudomonadati</taxon>
        <taxon>Pseudomonadota</taxon>
        <taxon>Betaproteobacteria</taxon>
        <taxon>Burkholderiales</taxon>
        <taxon>Burkholderiaceae</taxon>
        <taxon>Burkholderia</taxon>
        <taxon>pseudomallei group</taxon>
    </lineage>
</organism>
<protein>
    <recommendedName>
        <fullName evidence="1">ATP synthase subunit delta</fullName>
    </recommendedName>
    <alternativeName>
        <fullName evidence="1">ATP synthase F(1) sector subunit delta</fullName>
    </alternativeName>
    <alternativeName>
        <fullName evidence="1">F-type ATPase subunit delta</fullName>
        <shortName evidence="1">F-ATPase subunit delta</shortName>
    </alternativeName>
</protein>
<name>ATPD_BURP1</name>
<comment type="function">
    <text evidence="1">F(1)F(0) ATP synthase produces ATP from ADP in the presence of a proton or sodium gradient. F-type ATPases consist of two structural domains, F(1) containing the extramembraneous catalytic core and F(0) containing the membrane proton channel, linked together by a central stalk and a peripheral stalk. During catalysis, ATP synthesis in the catalytic domain of F(1) is coupled via a rotary mechanism of the central stalk subunits to proton translocation.</text>
</comment>
<comment type="function">
    <text evidence="1">This protein is part of the stalk that links CF(0) to CF(1). It either transmits conformational changes from CF(0) to CF(1) or is implicated in proton conduction.</text>
</comment>
<comment type="subunit">
    <text evidence="1">F-type ATPases have 2 components, F(1) - the catalytic core - and F(0) - the membrane proton channel. F(1) has five subunits: alpha(3), beta(3), gamma(1), delta(1), epsilon(1). F(0) has three main subunits: a(1), b(2) and c(10-14). The alpha and beta chains form an alternating ring which encloses part of the gamma chain. F(1) is attached to F(0) by a central stalk formed by the gamma and epsilon chains, while a peripheral stalk is formed by the delta and b chains.</text>
</comment>
<comment type="subcellular location">
    <subcellularLocation>
        <location evidence="1">Cell inner membrane</location>
        <topology evidence="1">Peripheral membrane protein</topology>
    </subcellularLocation>
</comment>
<comment type="similarity">
    <text evidence="1">Belongs to the ATPase delta chain family.</text>
</comment>
<dbReference type="EMBL" id="CP000124">
    <property type="protein sequence ID" value="ABA49818.1"/>
    <property type="molecule type" value="Genomic_DNA"/>
</dbReference>
<dbReference type="RefSeq" id="WP_004524508.1">
    <property type="nucleotide sequence ID" value="NC_007434.1"/>
</dbReference>
<dbReference type="SMR" id="Q3JXV5"/>
<dbReference type="EnsemblBacteria" id="ABA49818">
    <property type="protein sequence ID" value="ABA49818"/>
    <property type="gene ID" value="BURPS1710b_0182"/>
</dbReference>
<dbReference type="KEGG" id="bpm:BURPS1710b_0182"/>
<dbReference type="HOGENOM" id="CLU_085114_3_0_4"/>
<dbReference type="Proteomes" id="UP000002700">
    <property type="component" value="Chromosome I"/>
</dbReference>
<dbReference type="GO" id="GO:0005886">
    <property type="term" value="C:plasma membrane"/>
    <property type="evidence" value="ECO:0007669"/>
    <property type="project" value="UniProtKB-SubCell"/>
</dbReference>
<dbReference type="GO" id="GO:0045259">
    <property type="term" value="C:proton-transporting ATP synthase complex"/>
    <property type="evidence" value="ECO:0007669"/>
    <property type="project" value="UniProtKB-KW"/>
</dbReference>
<dbReference type="GO" id="GO:0046933">
    <property type="term" value="F:proton-transporting ATP synthase activity, rotational mechanism"/>
    <property type="evidence" value="ECO:0007669"/>
    <property type="project" value="UniProtKB-UniRule"/>
</dbReference>
<dbReference type="Gene3D" id="1.10.520.20">
    <property type="entry name" value="N-terminal domain of the delta subunit of the F1F0-ATP synthase"/>
    <property type="match status" value="1"/>
</dbReference>
<dbReference type="HAMAP" id="MF_01416">
    <property type="entry name" value="ATP_synth_delta_bact"/>
    <property type="match status" value="1"/>
</dbReference>
<dbReference type="InterPro" id="IPR026015">
    <property type="entry name" value="ATP_synth_OSCP/delta_N_sf"/>
</dbReference>
<dbReference type="InterPro" id="IPR000711">
    <property type="entry name" value="ATPase_OSCP/dsu"/>
</dbReference>
<dbReference type="NCBIfam" id="TIGR01145">
    <property type="entry name" value="ATP_synt_delta"/>
    <property type="match status" value="1"/>
</dbReference>
<dbReference type="NCBIfam" id="NF004402">
    <property type="entry name" value="PRK05758.2-2"/>
    <property type="match status" value="1"/>
</dbReference>
<dbReference type="PANTHER" id="PTHR11910">
    <property type="entry name" value="ATP SYNTHASE DELTA CHAIN"/>
    <property type="match status" value="1"/>
</dbReference>
<dbReference type="Pfam" id="PF00213">
    <property type="entry name" value="OSCP"/>
    <property type="match status" value="1"/>
</dbReference>
<dbReference type="PRINTS" id="PR00125">
    <property type="entry name" value="ATPASEDELTA"/>
</dbReference>
<dbReference type="SUPFAM" id="SSF47928">
    <property type="entry name" value="N-terminal domain of the delta subunit of the F1F0-ATP synthase"/>
    <property type="match status" value="1"/>
</dbReference>
<feature type="chain" id="PRO_1000184666" description="ATP synthase subunit delta">
    <location>
        <begin position="1"/>
        <end position="179"/>
    </location>
</feature>
<sequence length="179" mass="18987">MAELATIARPYAEALFRVAEGGDISAWSTLVQELAQVAQLPEVLSVASSPKVSRTQVAELLLAALKSPLASGAQAKNFVQMLVDNHRIALLPEIAEQFEALKNAREGAADVQIVSAFPLEGAQLAELVTSLERKFKRKLKPAVEVDSSLIGGVRVTVGDEVLDTSVRARLAGMQAALTA</sequence>
<keyword id="KW-0066">ATP synthesis</keyword>
<keyword id="KW-0997">Cell inner membrane</keyword>
<keyword id="KW-1003">Cell membrane</keyword>
<keyword id="KW-0139">CF(1)</keyword>
<keyword id="KW-0375">Hydrogen ion transport</keyword>
<keyword id="KW-0406">Ion transport</keyword>
<keyword id="KW-0472">Membrane</keyword>
<keyword id="KW-0813">Transport</keyword>
<accession>Q3JXV5</accession>
<evidence type="ECO:0000255" key="1">
    <source>
        <dbReference type="HAMAP-Rule" id="MF_01416"/>
    </source>
</evidence>
<reference key="1">
    <citation type="journal article" date="2010" name="Genome Biol. Evol.">
        <title>Continuing evolution of Burkholderia mallei through genome reduction and large-scale rearrangements.</title>
        <authorList>
            <person name="Losada L."/>
            <person name="Ronning C.M."/>
            <person name="DeShazer D."/>
            <person name="Woods D."/>
            <person name="Fedorova N."/>
            <person name="Kim H.S."/>
            <person name="Shabalina S.A."/>
            <person name="Pearson T.R."/>
            <person name="Brinkac L."/>
            <person name="Tan P."/>
            <person name="Nandi T."/>
            <person name="Crabtree J."/>
            <person name="Badger J."/>
            <person name="Beckstrom-Sternberg S."/>
            <person name="Saqib M."/>
            <person name="Schutzer S.E."/>
            <person name="Keim P."/>
            <person name="Nierman W.C."/>
        </authorList>
    </citation>
    <scope>NUCLEOTIDE SEQUENCE [LARGE SCALE GENOMIC DNA]</scope>
    <source>
        <strain>1710b</strain>
    </source>
</reference>
<gene>
    <name evidence="1" type="primary">atpH</name>
    <name type="ordered locus">BURPS1710b_0182</name>
</gene>
<proteinExistence type="inferred from homology"/>